<protein>
    <recommendedName>
        <fullName>ATP-dependent RNA helicase HAS1</fullName>
        <ecNumber>3.6.4.13</ecNumber>
    </recommendedName>
</protein>
<organism>
    <name type="scientific">Chaetomium globosum (strain ATCC 6205 / CBS 148.51 / DSM 1962 / NBRC 6347 / NRRL 1970)</name>
    <name type="common">Soil fungus</name>
    <dbReference type="NCBI Taxonomy" id="306901"/>
    <lineage>
        <taxon>Eukaryota</taxon>
        <taxon>Fungi</taxon>
        <taxon>Dikarya</taxon>
        <taxon>Ascomycota</taxon>
        <taxon>Pezizomycotina</taxon>
        <taxon>Sordariomycetes</taxon>
        <taxon>Sordariomycetidae</taxon>
        <taxon>Sordariales</taxon>
        <taxon>Chaetomiaceae</taxon>
        <taxon>Chaetomium</taxon>
    </lineage>
</organism>
<name>HAS1_CHAGB</name>
<keyword id="KW-0067">ATP-binding</keyword>
<keyword id="KW-0347">Helicase</keyword>
<keyword id="KW-0378">Hydrolase</keyword>
<keyword id="KW-0547">Nucleotide-binding</keyword>
<keyword id="KW-0539">Nucleus</keyword>
<keyword id="KW-1185">Reference proteome</keyword>
<keyword id="KW-0690">Ribosome biogenesis</keyword>
<keyword id="KW-0694">RNA-binding</keyword>
<keyword id="KW-0698">rRNA processing</keyword>
<dbReference type="EC" id="3.6.4.13"/>
<dbReference type="EMBL" id="CH408035">
    <property type="protein sequence ID" value="EAQ84279.1"/>
    <property type="molecule type" value="Genomic_DNA"/>
</dbReference>
<dbReference type="RefSeq" id="XP_001228610.1">
    <property type="nucleotide sequence ID" value="XM_001228609.1"/>
</dbReference>
<dbReference type="SMR" id="Q2GMX1"/>
<dbReference type="FunCoup" id="Q2GMX1">
    <property type="interactions" value="1033"/>
</dbReference>
<dbReference type="STRING" id="306901.Q2GMX1"/>
<dbReference type="GeneID" id="4397061"/>
<dbReference type="VEuPathDB" id="FungiDB:CHGG_10683"/>
<dbReference type="eggNOG" id="KOG0342">
    <property type="taxonomic scope" value="Eukaryota"/>
</dbReference>
<dbReference type="HOGENOM" id="CLU_003041_26_5_1"/>
<dbReference type="InParanoid" id="Q2GMX1"/>
<dbReference type="OMA" id="LMEFHSQ"/>
<dbReference type="OrthoDB" id="10259640at2759"/>
<dbReference type="Proteomes" id="UP000001056">
    <property type="component" value="Unassembled WGS sequence"/>
</dbReference>
<dbReference type="GO" id="GO:0005635">
    <property type="term" value="C:nuclear envelope"/>
    <property type="evidence" value="ECO:0007669"/>
    <property type="project" value="EnsemblFungi"/>
</dbReference>
<dbReference type="GO" id="GO:0005730">
    <property type="term" value="C:nucleolus"/>
    <property type="evidence" value="ECO:0007669"/>
    <property type="project" value="UniProtKB-SubCell"/>
</dbReference>
<dbReference type="GO" id="GO:0030687">
    <property type="term" value="C:preribosome, large subunit precursor"/>
    <property type="evidence" value="ECO:0007669"/>
    <property type="project" value="EnsemblFungi"/>
</dbReference>
<dbReference type="GO" id="GO:0032040">
    <property type="term" value="C:small-subunit processome"/>
    <property type="evidence" value="ECO:0007669"/>
    <property type="project" value="EnsemblFungi"/>
</dbReference>
<dbReference type="GO" id="GO:0005524">
    <property type="term" value="F:ATP binding"/>
    <property type="evidence" value="ECO:0007669"/>
    <property type="project" value="UniProtKB-KW"/>
</dbReference>
<dbReference type="GO" id="GO:0016887">
    <property type="term" value="F:ATP hydrolysis activity"/>
    <property type="evidence" value="ECO:0007669"/>
    <property type="project" value="RHEA"/>
</dbReference>
<dbReference type="GO" id="GO:0042802">
    <property type="term" value="F:identical protein binding"/>
    <property type="evidence" value="ECO:0007669"/>
    <property type="project" value="EnsemblFungi"/>
</dbReference>
<dbReference type="GO" id="GO:0003723">
    <property type="term" value="F:RNA binding"/>
    <property type="evidence" value="ECO:0007669"/>
    <property type="project" value="UniProtKB-KW"/>
</dbReference>
<dbReference type="GO" id="GO:0003724">
    <property type="term" value="F:RNA helicase activity"/>
    <property type="evidence" value="ECO:0007669"/>
    <property type="project" value="UniProtKB-EC"/>
</dbReference>
<dbReference type="GO" id="GO:0000463">
    <property type="term" value="P:maturation of LSU-rRNA from tricistronic rRNA transcript (SSU-rRNA, 5.8S rRNA, LSU-rRNA)"/>
    <property type="evidence" value="ECO:0007669"/>
    <property type="project" value="EnsemblFungi"/>
</dbReference>
<dbReference type="GO" id="GO:0000462">
    <property type="term" value="P:maturation of SSU-rRNA from tricistronic rRNA transcript (SSU-rRNA, 5.8S rRNA, LSU-rRNA)"/>
    <property type="evidence" value="ECO:0007669"/>
    <property type="project" value="EnsemblFungi"/>
</dbReference>
<dbReference type="GO" id="GO:1990417">
    <property type="term" value="P:snoRNA release from pre-rRNA"/>
    <property type="evidence" value="ECO:0007669"/>
    <property type="project" value="EnsemblFungi"/>
</dbReference>
<dbReference type="CDD" id="cd17942">
    <property type="entry name" value="DEADc_DDX18"/>
    <property type="match status" value="1"/>
</dbReference>
<dbReference type="CDD" id="cd18787">
    <property type="entry name" value="SF2_C_DEAD"/>
    <property type="match status" value="1"/>
</dbReference>
<dbReference type="FunFam" id="3.40.50.300:FF:000379">
    <property type="entry name" value="RNA helicase"/>
    <property type="match status" value="1"/>
</dbReference>
<dbReference type="Gene3D" id="3.40.50.300">
    <property type="entry name" value="P-loop containing nucleotide triphosphate hydrolases"/>
    <property type="match status" value="2"/>
</dbReference>
<dbReference type="InterPro" id="IPR044773">
    <property type="entry name" value="DDX18/Has1_DEADc"/>
</dbReference>
<dbReference type="InterPro" id="IPR011545">
    <property type="entry name" value="DEAD/DEAH_box_helicase_dom"/>
</dbReference>
<dbReference type="InterPro" id="IPR014001">
    <property type="entry name" value="Helicase_ATP-bd"/>
</dbReference>
<dbReference type="InterPro" id="IPR001650">
    <property type="entry name" value="Helicase_C-like"/>
</dbReference>
<dbReference type="InterPro" id="IPR027417">
    <property type="entry name" value="P-loop_NTPase"/>
</dbReference>
<dbReference type="InterPro" id="IPR000629">
    <property type="entry name" value="RNA-helicase_DEAD-box_CS"/>
</dbReference>
<dbReference type="InterPro" id="IPR014014">
    <property type="entry name" value="RNA_helicase_DEAD_Q_motif"/>
</dbReference>
<dbReference type="InterPro" id="IPR025313">
    <property type="entry name" value="SPB4-like_CTE"/>
</dbReference>
<dbReference type="PANTHER" id="PTHR24031">
    <property type="entry name" value="RNA HELICASE"/>
    <property type="match status" value="1"/>
</dbReference>
<dbReference type="Pfam" id="PF13959">
    <property type="entry name" value="CTE_SPB4"/>
    <property type="match status" value="1"/>
</dbReference>
<dbReference type="Pfam" id="PF00270">
    <property type="entry name" value="DEAD"/>
    <property type="match status" value="1"/>
</dbReference>
<dbReference type="Pfam" id="PF00271">
    <property type="entry name" value="Helicase_C"/>
    <property type="match status" value="1"/>
</dbReference>
<dbReference type="SMART" id="SM00487">
    <property type="entry name" value="DEXDc"/>
    <property type="match status" value="1"/>
</dbReference>
<dbReference type="SMART" id="SM01178">
    <property type="entry name" value="DUF4217"/>
    <property type="match status" value="1"/>
</dbReference>
<dbReference type="SMART" id="SM00490">
    <property type="entry name" value="HELICc"/>
    <property type="match status" value="1"/>
</dbReference>
<dbReference type="SUPFAM" id="SSF52540">
    <property type="entry name" value="P-loop containing nucleoside triphosphate hydrolases"/>
    <property type="match status" value="2"/>
</dbReference>
<dbReference type="PROSITE" id="PS00039">
    <property type="entry name" value="DEAD_ATP_HELICASE"/>
    <property type="match status" value="1"/>
</dbReference>
<dbReference type="PROSITE" id="PS51192">
    <property type="entry name" value="HELICASE_ATP_BIND_1"/>
    <property type="match status" value="1"/>
</dbReference>
<dbReference type="PROSITE" id="PS51194">
    <property type="entry name" value="HELICASE_CTER"/>
    <property type="match status" value="1"/>
</dbReference>
<dbReference type="PROSITE" id="PS51195">
    <property type="entry name" value="Q_MOTIF"/>
    <property type="match status" value="1"/>
</dbReference>
<reference key="1">
    <citation type="journal article" date="2015" name="Genome Announc.">
        <title>Draft genome sequence of the cellulolytic fungus Chaetomium globosum.</title>
        <authorList>
            <person name="Cuomo C.A."/>
            <person name="Untereiner W.A."/>
            <person name="Ma L.-J."/>
            <person name="Grabherr M."/>
            <person name="Birren B.W."/>
        </authorList>
    </citation>
    <scope>NUCLEOTIDE SEQUENCE [LARGE SCALE GENOMIC DNA]</scope>
    <source>
        <strain>ATCC 6205 / CBS 148.51 / DSM 1962 / NBRC 6347 / NRRL 1970</strain>
    </source>
</reference>
<gene>
    <name type="primary">HAS1</name>
    <name type="ORF">CHGG_10683</name>
</gene>
<sequence>MASDLSKKRKFKDSKGSKPERALASSSKAKKLKRAPTPEDSDAERDNSSDPEIENQEPEVEVPGPPQDNSEDQEAEENANAFERQDEPAGLDSAIQKGDGSLLGPSVSTDAQAFSELNLSDKTMMSINEMGFTKMTEIQRRGIPPLLAGKDVLGAAKTGSGKTLAFLIPAIEMLNSLRFKPRNGTGVIVVTPTRELALQIFGVARELMKNHSQTYGVVIGGANIRAEEDKLGKGVNLLIATPGRLLDHLRRGSFVFKNLKSLIIDEADRILEVGFEDEMRHIVKILPKENRQTMLFSATQTTKVEDLARISLRPGPLYINVDEEKQFSTVEGLDQGYVIVDADKRFLLLFSFLKKMAKKKIIVFLSSCNSVKYYSELLQYIDLQVLDLHGKQKQQKRTNTFFEFCNAKQGTLICTDVAARGLDIPQVDWIVQFDPPDDPRDYIHRVGRTARGNNTKGRSLLFLQPCELGFLAHLKAAKVPVVEYDFPKNKILNVQSQLEKLIGSNYYLNQSAKDGYRSYLHAYASHSLRSVFDVQKLDMVKVAKGFGFSTPPRVDITLGAGMSRDKKPQARRAYGSQPRQSGHQRR</sequence>
<accession>Q2GMX1</accession>
<comment type="function">
    <text>ATP-dependent RNA helicase involved in 40S ribosomal subunit biogenesis. Required for the processing and cleavage of 35S pre-rRNA at sites A0, A1, and A2, leading to mature 18S rRNA.</text>
</comment>
<comment type="catalytic activity">
    <reaction>
        <text>ATP + H2O = ADP + phosphate + H(+)</text>
        <dbReference type="Rhea" id="RHEA:13065"/>
        <dbReference type="ChEBI" id="CHEBI:15377"/>
        <dbReference type="ChEBI" id="CHEBI:15378"/>
        <dbReference type="ChEBI" id="CHEBI:30616"/>
        <dbReference type="ChEBI" id="CHEBI:43474"/>
        <dbReference type="ChEBI" id="CHEBI:456216"/>
        <dbReference type="EC" id="3.6.4.13"/>
    </reaction>
</comment>
<comment type="subunit">
    <text evidence="1">Associates in the nucleolus with the 60S and pre-60S ribosomal subunits.</text>
</comment>
<comment type="subcellular location">
    <subcellularLocation>
        <location evidence="1">Nucleus</location>
        <location evidence="1">Nucleolus</location>
    </subcellularLocation>
</comment>
<comment type="domain">
    <text>The Q motif is unique to and characteristic of the DEAD box family of RNA helicases and controls ATP binding and hydrolysis.</text>
</comment>
<comment type="similarity">
    <text evidence="5">Belongs to the DEAD box helicase family. DDX18/HAS1 subfamily.</text>
</comment>
<evidence type="ECO:0000250" key="1"/>
<evidence type="ECO:0000255" key="2">
    <source>
        <dbReference type="PROSITE-ProRule" id="PRU00541"/>
    </source>
</evidence>
<evidence type="ECO:0000255" key="3">
    <source>
        <dbReference type="PROSITE-ProRule" id="PRU00542"/>
    </source>
</evidence>
<evidence type="ECO:0000256" key="4">
    <source>
        <dbReference type="SAM" id="MobiDB-lite"/>
    </source>
</evidence>
<evidence type="ECO:0000305" key="5"/>
<feature type="chain" id="PRO_0000256005" description="ATP-dependent RNA helicase HAS1">
    <location>
        <begin position="1"/>
        <end position="586"/>
    </location>
</feature>
<feature type="domain" description="Helicase ATP-binding" evidence="2">
    <location>
        <begin position="143"/>
        <end position="318"/>
    </location>
</feature>
<feature type="domain" description="Helicase C-terminal" evidence="3">
    <location>
        <begin position="332"/>
        <end position="502"/>
    </location>
</feature>
<feature type="region of interest" description="Disordered" evidence="4">
    <location>
        <begin position="1"/>
        <end position="107"/>
    </location>
</feature>
<feature type="region of interest" description="Disordered" evidence="4">
    <location>
        <begin position="557"/>
        <end position="586"/>
    </location>
</feature>
<feature type="short sequence motif" description="Q motif">
    <location>
        <begin position="112"/>
        <end position="140"/>
    </location>
</feature>
<feature type="short sequence motif" description="DEAD box">
    <location>
        <begin position="265"/>
        <end position="268"/>
    </location>
</feature>
<feature type="compositionally biased region" description="Acidic residues" evidence="4">
    <location>
        <begin position="39"/>
        <end position="60"/>
    </location>
</feature>
<feature type="compositionally biased region" description="Polar residues" evidence="4">
    <location>
        <begin position="577"/>
        <end position="586"/>
    </location>
</feature>
<feature type="binding site" evidence="2">
    <location>
        <begin position="156"/>
        <end position="163"/>
    </location>
    <ligand>
        <name>ATP</name>
        <dbReference type="ChEBI" id="CHEBI:30616"/>
    </ligand>
</feature>
<proteinExistence type="inferred from homology"/>